<dbReference type="EC" id="6.1.1.19" evidence="1"/>
<dbReference type="EMBL" id="CP000422">
    <property type="protein sequence ID" value="ABJ67730.1"/>
    <property type="molecule type" value="Genomic_DNA"/>
</dbReference>
<dbReference type="RefSeq" id="WP_011673194.1">
    <property type="nucleotide sequence ID" value="NC_008525.1"/>
</dbReference>
<dbReference type="SMR" id="Q03GE2"/>
<dbReference type="STRING" id="278197.PEPE_0669"/>
<dbReference type="GeneID" id="33062076"/>
<dbReference type="KEGG" id="ppe:PEPE_0669"/>
<dbReference type="eggNOG" id="COG0018">
    <property type="taxonomic scope" value="Bacteria"/>
</dbReference>
<dbReference type="HOGENOM" id="CLU_006406_6_1_9"/>
<dbReference type="OrthoDB" id="9805987at2"/>
<dbReference type="Proteomes" id="UP000000773">
    <property type="component" value="Chromosome"/>
</dbReference>
<dbReference type="GO" id="GO:0005737">
    <property type="term" value="C:cytoplasm"/>
    <property type="evidence" value="ECO:0007669"/>
    <property type="project" value="UniProtKB-SubCell"/>
</dbReference>
<dbReference type="GO" id="GO:0004814">
    <property type="term" value="F:arginine-tRNA ligase activity"/>
    <property type="evidence" value="ECO:0007669"/>
    <property type="project" value="UniProtKB-UniRule"/>
</dbReference>
<dbReference type="GO" id="GO:0005524">
    <property type="term" value="F:ATP binding"/>
    <property type="evidence" value="ECO:0007669"/>
    <property type="project" value="UniProtKB-UniRule"/>
</dbReference>
<dbReference type="GO" id="GO:0006420">
    <property type="term" value="P:arginyl-tRNA aminoacylation"/>
    <property type="evidence" value="ECO:0007669"/>
    <property type="project" value="UniProtKB-UniRule"/>
</dbReference>
<dbReference type="CDD" id="cd07956">
    <property type="entry name" value="Anticodon_Ia_Arg"/>
    <property type="match status" value="1"/>
</dbReference>
<dbReference type="CDD" id="cd00671">
    <property type="entry name" value="ArgRS_core"/>
    <property type="match status" value="1"/>
</dbReference>
<dbReference type="FunFam" id="3.40.50.620:FF:000116">
    <property type="entry name" value="Arginine--tRNA ligase"/>
    <property type="match status" value="1"/>
</dbReference>
<dbReference type="FunFam" id="1.10.730.10:FF:000006">
    <property type="entry name" value="Arginyl-tRNA synthetase 2, mitochondrial"/>
    <property type="match status" value="1"/>
</dbReference>
<dbReference type="Gene3D" id="3.30.1360.70">
    <property type="entry name" value="Arginyl tRNA synthetase N-terminal domain"/>
    <property type="match status" value="1"/>
</dbReference>
<dbReference type="Gene3D" id="3.40.50.620">
    <property type="entry name" value="HUPs"/>
    <property type="match status" value="1"/>
</dbReference>
<dbReference type="Gene3D" id="1.10.730.10">
    <property type="entry name" value="Isoleucyl-tRNA Synthetase, Domain 1"/>
    <property type="match status" value="1"/>
</dbReference>
<dbReference type="HAMAP" id="MF_00123">
    <property type="entry name" value="Arg_tRNA_synth"/>
    <property type="match status" value="1"/>
</dbReference>
<dbReference type="InterPro" id="IPR001278">
    <property type="entry name" value="Arg-tRNA-ligase"/>
</dbReference>
<dbReference type="InterPro" id="IPR005148">
    <property type="entry name" value="Arg-tRNA-synth_N"/>
</dbReference>
<dbReference type="InterPro" id="IPR036695">
    <property type="entry name" value="Arg-tRNA-synth_N_sf"/>
</dbReference>
<dbReference type="InterPro" id="IPR035684">
    <property type="entry name" value="ArgRS_core"/>
</dbReference>
<dbReference type="InterPro" id="IPR008909">
    <property type="entry name" value="DALR_anticod-bd"/>
</dbReference>
<dbReference type="InterPro" id="IPR014729">
    <property type="entry name" value="Rossmann-like_a/b/a_fold"/>
</dbReference>
<dbReference type="InterPro" id="IPR009080">
    <property type="entry name" value="tRNAsynth_Ia_anticodon-bd"/>
</dbReference>
<dbReference type="NCBIfam" id="TIGR00456">
    <property type="entry name" value="argS"/>
    <property type="match status" value="1"/>
</dbReference>
<dbReference type="PANTHER" id="PTHR11956:SF5">
    <property type="entry name" value="ARGININE--TRNA LIGASE, CYTOPLASMIC"/>
    <property type="match status" value="1"/>
</dbReference>
<dbReference type="PANTHER" id="PTHR11956">
    <property type="entry name" value="ARGINYL-TRNA SYNTHETASE"/>
    <property type="match status" value="1"/>
</dbReference>
<dbReference type="Pfam" id="PF03485">
    <property type="entry name" value="Arg_tRNA_synt_N"/>
    <property type="match status" value="1"/>
</dbReference>
<dbReference type="Pfam" id="PF05746">
    <property type="entry name" value="DALR_1"/>
    <property type="match status" value="1"/>
</dbReference>
<dbReference type="Pfam" id="PF00750">
    <property type="entry name" value="tRNA-synt_1d"/>
    <property type="match status" value="1"/>
</dbReference>
<dbReference type="PRINTS" id="PR01038">
    <property type="entry name" value="TRNASYNTHARG"/>
</dbReference>
<dbReference type="SMART" id="SM01016">
    <property type="entry name" value="Arg_tRNA_synt_N"/>
    <property type="match status" value="1"/>
</dbReference>
<dbReference type="SMART" id="SM00836">
    <property type="entry name" value="DALR_1"/>
    <property type="match status" value="1"/>
</dbReference>
<dbReference type="SUPFAM" id="SSF47323">
    <property type="entry name" value="Anticodon-binding domain of a subclass of class I aminoacyl-tRNA synthetases"/>
    <property type="match status" value="1"/>
</dbReference>
<dbReference type="SUPFAM" id="SSF55190">
    <property type="entry name" value="Arginyl-tRNA synthetase (ArgRS), N-terminal 'additional' domain"/>
    <property type="match status" value="1"/>
</dbReference>
<dbReference type="SUPFAM" id="SSF52374">
    <property type="entry name" value="Nucleotidylyl transferase"/>
    <property type="match status" value="1"/>
</dbReference>
<keyword id="KW-0030">Aminoacyl-tRNA synthetase</keyword>
<keyword id="KW-0067">ATP-binding</keyword>
<keyword id="KW-0963">Cytoplasm</keyword>
<keyword id="KW-0436">Ligase</keyword>
<keyword id="KW-0547">Nucleotide-binding</keyword>
<keyword id="KW-0648">Protein biosynthesis</keyword>
<evidence type="ECO:0000255" key="1">
    <source>
        <dbReference type="HAMAP-Rule" id="MF_00123"/>
    </source>
</evidence>
<reference key="1">
    <citation type="journal article" date="2006" name="Proc. Natl. Acad. Sci. U.S.A.">
        <title>Comparative genomics of the lactic acid bacteria.</title>
        <authorList>
            <person name="Makarova K.S."/>
            <person name="Slesarev A."/>
            <person name="Wolf Y.I."/>
            <person name="Sorokin A."/>
            <person name="Mirkin B."/>
            <person name="Koonin E.V."/>
            <person name="Pavlov A."/>
            <person name="Pavlova N."/>
            <person name="Karamychev V."/>
            <person name="Polouchine N."/>
            <person name="Shakhova V."/>
            <person name="Grigoriev I."/>
            <person name="Lou Y."/>
            <person name="Rohksar D."/>
            <person name="Lucas S."/>
            <person name="Huang K."/>
            <person name="Goodstein D.M."/>
            <person name="Hawkins T."/>
            <person name="Plengvidhya V."/>
            <person name="Welker D."/>
            <person name="Hughes J."/>
            <person name="Goh Y."/>
            <person name="Benson A."/>
            <person name="Baldwin K."/>
            <person name="Lee J.-H."/>
            <person name="Diaz-Muniz I."/>
            <person name="Dosti B."/>
            <person name="Smeianov V."/>
            <person name="Wechter W."/>
            <person name="Barabote R."/>
            <person name="Lorca G."/>
            <person name="Altermann E."/>
            <person name="Barrangou R."/>
            <person name="Ganesan B."/>
            <person name="Xie Y."/>
            <person name="Rawsthorne H."/>
            <person name="Tamir D."/>
            <person name="Parker C."/>
            <person name="Breidt F."/>
            <person name="Broadbent J.R."/>
            <person name="Hutkins R."/>
            <person name="O'Sullivan D."/>
            <person name="Steele J."/>
            <person name="Unlu G."/>
            <person name="Saier M.H. Jr."/>
            <person name="Klaenhammer T."/>
            <person name="Richardson P."/>
            <person name="Kozyavkin S."/>
            <person name="Weimer B.C."/>
            <person name="Mills D.A."/>
        </authorList>
    </citation>
    <scope>NUCLEOTIDE SEQUENCE [LARGE SCALE GENOMIC DNA]</scope>
    <source>
        <strain>ATCC 25745 / CCUG 21536 / LMG 10740 / 183-1w</strain>
    </source>
</reference>
<proteinExistence type="inferred from homology"/>
<comment type="catalytic activity">
    <reaction evidence="1">
        <text>tRNA(Arg) + L-arginine + ATP = L-arginyl-tRNA(Arg) + AMP + diphosphate</text>
        <dbReference type="Rhea" id="RHEA:20301"/>
        <dbReference type="Rhea" id="RHEA-COMP:9658"/>
        <dbReference type="Rhea" id="RHEA-COMP:9673"/>
        <dbReference type="ChEBI" id="CHEBI:30616"/>
        <dbReference type="ChEBI" id="CHEBI:32682"/>
        <dbReference type="ChEBI" id="CHEBI:33019"/>
        <dbReference type="ChEBI" id="CHEBI:78442"/>
        <dbReference type="ChEBI" id="CHEBI:78513"/>
        <dbReference type="ChEBI" id="CHEBI:456215"/>
        <dbReference type="EC" id="6.1.1.19"/>
    </reaction>
</comment>
<comment type="subunit">
    <text evidence="1">Monomer.</text>
</comment>
<comment type="subcellular location">
    <subcellularLocation>
        <location evidence="1">Cytoplasm</location>
    </subcellularLocation>
</comment>
<comment type="similarity">
    <text evidence="1">Belongs to the class-I aminoacyl-tRNA synthetase family.</text>
</comment>
<gene>
    <name evidence="1" type="primary">argS</name>
    <name type="ordered locus">PEPE_0669</name>
</gene>
<organism>
    <name type="scientific">Pediococcus pentosaceus (strain ATCC 25745 / CCUG 21536 / LMG 10740 / 183-1w)</name>
    <dbReference type="NCBI Taxonomy" id="278197"/>
    <lineage>
        <taxon>Bacteria</taxon>
        <taxon>Bacillati</taxon>
        <taxon>Bacillota</taxon>
        <taxon>Bacilli</taxon>
        <taxon>Lactobacillales</taxon>
        <taxon>Lactobacillaceae</taxon>
        <taxon>Pediococcus</taxon>
    </lineage>
</organism>
<feature type="chain" id="PRO_1000018084" description="Arginine--tRNA ligase">
    <location>
        <begin position="1"/>
        <end position="562"/>
    </location>
</feature>
<feature type="short sequence motif" description="'HIGH' region">
    <location>
        <begin position="122"/>
        <end position="132"/>
    </location>
</feature>
<accession>Q03GE2</accession>
<protein>
    <recommendedName>
        <fullName evidence="1">Arginine--tRNA ligase</fullName>
        <ecNumber evidence="1">6.1.1.19</ecNumber>
    </recommendedName>
    <alternativeName>
        <fullName evidence="1">Arginyl-tRNA synthetase</fullName>
        <shortName evidence="1">ArgRS</shortName>
    </alternativeName>
</protein>
<name>SYR_PEDPA</name>
<sequence>MDYKKKVAAALAPALNEYLTDTEIYEKIEIPKESKMGDYAFPTFTLAKVLRKAPQMIASELVEKIDQDQFEKVEVAGPYINFFLDKTAFGAEVLGTVLSQKAEYGQNDDGNQGNVPIDMSSPNIAKPISMGHLRSTVIGNSLSLIMSKNGYNPIKINHLGDWGTQFGKLITAYKLWGSEEEVKADPINKLLEYYVRFHKEDQEKPELDDIARDWFKKLEDGDEEAMNLWQWFREESLKSFKQIYDKLGITFDSYKGEAFYNDKMDEIVQILEDKGLLKESQGAQVVDLEKYNLNPALIKKTDGATLYITRDLAAALYRYRTYDFNQSLYVVGAEQTNHFKQLKAVLKEMGFDWSDDVHHIPFGLITLNGKKLSTRSGRVVLLDEVLNDAVSLAKKQINDKNPDLANADTVAKEVGVGAVIFHDLKNERTNSFDFNLEDVVRFEGETGPYVQYSRARAESILRKAGDVEEFAQLNITDPKAWDTLKALQDFPNIVKRAAAQYEPSVIAKYALGLAKAFNKYYANSKILADDEEKTARLALVKSVSIVLEESLRLLGVKAPDEM</sequence>